<protein>
    <recommendedName>
        <fullName>Alanine dehydrogenase 2</fullName>
        <ecNumber>1.4.1.1</ecNumber>
    </recommendedName>
</protein>
<organism>
    <name type="scientific">Staphylococcus aureus (strain MSSA476)</name>
    <dbReference type="NCBI Taxonomy" id="282459"/>
    <lineage>
        <taxon>Bacteria</taxon>
        <taxon>Bacillati</taxon>
        <taxon>Bacillota</taxon>
        <taxon>Bacilli</taxon>
        <taxon>Bacillales</taxon>
        <taxon>Staphylococcaceae</taxon>
        <taxon>Staphylococcus</taxon>
    </lineage>
</organism>
<accession>Q6G8L8</accession>
<reference key="1">
    <citation type="journal article" date="2004" name="Proc. Natl. Acad. Sci. U.S.A.">
        <title>Complete genomes of two clinical Staphylococcus aureus strains: evidence for the rapid evolution of virulence and drug resistance.</title>
        <authorList>
            <person name="Holden M.T.G."/>
            <person name="Feil E.J."/>
            <person name="Lindsay J.A."/>
            <person name="Peacock S.J."/>
            <person name="Day N.P.J."/>
            <person name="Enright M.C."/>
            <person name="Foster T.J."/>
            <person name="Moore C.E."/>
            <person name="Hurst L."/>
            <person name="Atkin R."/>
            <person name="Barron A."/>
            <person name="Bason N."/>
            <person name="Bentley S.D."/>
            <person name="Chillingworth C."/>
            <person name="Chillingworth T."/>
            <person name="Churcher C."/>
            <person name="Clark L."/>
            <person name="Corton C."/>
            <person name="Cronin A."/>
            <person name="Doggett J."/>
            <person name="Dowd L."/>
            <person name="Feltwell T."/>
            <person name="Hance Z."/>
            <person name="Harris B."/>
            <person name="Hauser H."/>
            <person name="Holroyd S."/>
            <person name="Jagels K."/>
            <person name="James K.D."/>
            <person name="Lennard N."/>
            <person name="Line A."/>
            <person name="Mayes R."/>
            <person name="Moule S."/>
            <person name="Mungall K."/>
            <person name="Ormond D."/>
            <person name="Quail M.A."/>
            <person name="Rabbinowitsch E."/>
            <person name="Rutherford K.M."/>
            <person name="Sanders M."/>
            <person name="Sharp S."/>
            <person name="Simmonds M."/>
            <person name="Stevens K."/>
            <person name="Whitehead S."/>
            <person name="Barrell B.G."/>
            <person name="Spratt B.G."/>
            <person name="Parkhill J."/>
        </authorList>
    </citation>
    <scope>NUCLEOTIDE SEQUENCE [LARGE SCALE GENOMIC DNA]</scope>
    <source>
        <strain>MSSA476</strain>
    </source>
</reference>
<feature type="chain" id="PRO_0000199005" description="Alanine dehydrogenase 2">
    <location>
        <begin position="1"/>
        <end position="372"/>
    </location>
</feature>
<feature type="active site" evidence="2">
    <location>
        <position position="95"/>
    </location>
</feature>
<feature type="binding site" evidence="1">
    <location>
        <begin position="169"/>
        <end position="199"/>
    </location>
    <ligand>
        <name>NAD(+)</name>
        <dbReference type="ChEBI" id="CHEBI:57540"/>
    </ligand>
</feature>
<keyword id="KW-0520">NAD</keyword>
<keyword id="KW-0560">Oxidoreductase</keyword>
<evidence type="ECO:0000250" key="1"/>
<evidence type="ECO:0000255" key="2"/>
<evidence type="ECO:0000305" key="3"/>
<sequence length="372" mass="40105">MKIGIPREIKNNENRVGLSPSGVHALVESGHTVLVETNAGSGSFFEDVDYKEAGAEIVAEQAKVWDVDMVIKVKEPLESEYPYFKEGLVLFTYLHLANEEKLTQALIDRKVISIAYETVQLPDRSLPLLSPMSEVAGRMSAQVGAEFLQKLNGGMGILLGGVPGVPKGKVTIIGGGQAGTNAAKIALGLGADVTILDVNPKRLQQLDDLFGGRVHTIMSNPLNIELYVKQSDLVIGAVLIPGAKAPRLVTEDMIKQMKNGSVIIDIAIDQGGIFETTDKITTHDDPTYIKHGVVHYAVANMPGAVPRTSTLALNNATLPYALMLANKGYREAFKSNQPLSLGLNTYKGHVTNKGVAEAFEMEYKSVEEALQL</sequence>
<dbReference type="EC" id="1.4.1.1"/>
<dbReference type="EMBL" id="BX571857">
    <property type="protein sequence ID" value="CAG43438.1"/>
    <property type="molecule type" value="Genomic_DNA"/>
</dbReference>
<dbReference type="SMR" id="Q6G8L8"/>
<dbReference type="KEGG" id="sas:SAS1636"/>
<dbReference type="HOGENOM" id="CLU_003376_3_0_9"/>
<dbReference type="UniPathway" id="UPA00527">
    <property type="reaction ID" value="UER00585"/>
</dbReference>
<dbReference type="GO" id="GO:0005886">
    <property type="term" value="C:plasma membrane"/>
    <property type="evidence" value="ECO:0007669"/>
    <property type="project" value="TreeGrafter"/>
</dbReference>
<dbReference type="GO" id="GO:0000286">
    <property type="term" value="F:alanine dehydrogenase activity"/>
    <property type="evidence" value="ECO:0007669"/>
    <property type="project" value="UniProtKB-EC"/>
</dbReference>
<dbReference type="GO" id="GO:0042853">
    <property type="term" value="P:L-alanine catabolic process"/>
    <property type="evidence" value="ECO:0007669"/>
    <property type="project" value="UniProtKB-UniPathway"/>
</dbReference>
<dbReference type="CDD" id="cd05305">
    <property type="entry name" value="L-AlaDH"/>
    <property type="match status" value="1"/>
</dbReference>
<dbReference type="FunFam" id="3.40.50.720:FF:000049">
    <property type="entry name" value="Alanine dehydrogenase"/>
    <property type="match status" value="1"/>
</dbReference>
<dbReference type="Gene3D" id="3.40.50.720">
    <property type="entry name" value="NAD(P)-binding Rossmann-like Domain"/>
    <property type="match status" value="2"/>
</dbReference>
<dbReference type="InterPro" id="IPR008141">
    <property type="entry name" value="Ala_DH"/>
</dbReference>
<dbReference type="InterPro" id="IPR008143">
    <property type="entry name" value="Ala_DH/PNT_CS2"/>
</dbReference>
<dbReference type="InterPro" id="IPR008142">
    <property type="entry name" value="AlaDH/PNT_CS1"/>
</dbReference>
<dbReference type="InterPro" id="IPR007886">
    <property type="entry name" value="AlaDH/PNT_N"/>
</dbReference>
<dbReference type="InterPro" id="IPR007698">
    <property type="entry name" value="AlaDH/PNT_NAD(H)-bd"/>
</dbReference>
<dbReference type="InterPro" id="IPR036291">
    <property type="entry name" value="NAD(P)-bd_dom_sf"/>
</dbReference>
<dbReference type="NCBIfam" id="TIGR00518">
    <property type="entry name" value="alaDH"/>
    <property type="match status" value="1"/>
</dbReference>
<dbReference type="PANTHER" id="PTHR42795">
    <property type="entry name" value="ALANINE DEHYDROGENASE"/>
    <property type="match status" value="1"/>
</dbReference>
<dbReference type="PANTHER" id="PTHR42795:SF1">
    <property type="entry name" value="ALANINE DEHYDROGENASE"/>
    <property type="match status" value="1"/>
</dbReference>
<dbReference type="Pfam" id="PF01262">
    <property type="entry name" value="AlaDh_PNT_C"/>
    <property type="match status" value="1"/>
</dbReference>
<dbReference type="Pfam" id="PF05222">
    <property type="entry name" value="AlaDh_PNT_N"/>
    <property type="match status" value="1"/>
</dbReference>
<dbReference type="PIRSF" id="PIRSF000183">
    <property type="entry name" value="Alanine_dh"/>
    <property type="match status" value="1"/>
</dbReference>
<dbReference type="SMART" id="SM01002">
    <property type="entry name" value="AlaDh_PNT_C"/>
    <property type="match status" value="1"/>
</dbReference>
<dbReference type="SMART" id="SM01003">
    <property type="entry name" value="AlaDh_PNT_N"/>
    <property type="match status" value="1"/>
</dbReference>
<dbReference type="SUPFAM" id="SSF52283">
    <property type="entry name" value="Formate/glycerate dehydrogenase catalytic domain-like"/>
    <property type="match status" value="1"/>
</dbReference>
<dbReference type="SUPFAM" id="SSF51735">
    <property type="entry name" value="NAD(P)-binding Rossmann-fold domains"/>
    <property type="match status" value="1"/>
</dbReference>
<dbReference type="PROSITE" id="PS00836">
    <property type="entry name" value="ALADH_PNT_1"/>
    <property type="match status" value="1"/>
</dbReference>
<dbReference type="PROSITE" id="PS00837">
    <property type="entry name" value="ALADH_PNT_2"/>
    <property type="match status" value="1"/>
</dbReference>
<gene>
    <name type="primary">ald2</name>
    <name type="ordered locus">SAS1636</name>
</gene>
<comment type="function">
    <text evidence="1">May play a role in cell wall synthesis as L-alanine is an important constituent of the peptidoglycan layer.</text>
</comment>
<comment type="catalytic activity">
    <reaction>
        <text>L-alanine + NAD(+) + H2O = pyruvate + NH4(+) + NADH + H(+)</text>
        <dbReference type="Rhea" id="RHEA:18405"/>
        <dbReference type="ChEBI" id="CHEBI:15361"/>
        <dbReference type="ChEBI" id="CHEBI:15377"/>
        <dbReference type="ChEBI" id="CHEBI:15378"/>
        <dbReference type="ChEBI" id="CHEBI:28938"/>
        <dbReference type="ChEBI" id="CHEBI:57540"/>
        <dbReference type="ChEBI" id="CHEBI:57945"/>
        <dbReference type="ChEBI" id="CHEBI:57972"/>
        <dbReference type="EC" id="1.4.1.1"/>
    </reaction>
</comment>
<comment type="pathway">
    <text>Amino-acid degradation; L-alanine degradation via dehydrogenase pathway; NH(3) and pyruvate from L-alanine: step 1/1.</text>
</comment>
<comment type="similarity">
    <text evidence="3">Belongs to the AlaDH/PNT family.</text>
</comment>
<proteinExistence type="inferred from homology"/>
<name>DHA2_STAAS</name>